<accession>A9KMB4</accession>
<dbReference type="EMBL" id="CP000885">
    <property type="protein sequence ID" value="ABX42868.1"/>
    <property type="molecule type" value="Genomic_DNA"/>
</dbReference>
<dbReference type="RefSeq" id="WP_012200521.1">
    <property type="nucleotide sequence ID" value="NC_010001.1"/>
</dbReference>
<dbReference type="SMR" id="A9KMB4"/>
<dbReference type="STRING" id="357809.Cphy_2507"/>
<dbReference type="KEGG" id="cpy:Cphy_2507"/>
<dbReference type="eggNOG" id="COG0217">
    <property type="taxonomic scope" value="Bacteria"/>
</dbReference>
<dbReference type="HOGENOM" id="CLU_062974_2_2_9"/>
<dbReference type="OrthoDB" id="9781053at2"/>
<dbReference type="Proteomes" id="UP000000370">
    <property type="component" value="Chromosome"/>
</dbReference>
<dbReference type="GO" id="GO:0005829">
    <property type="term" value="C:cytosol"/>
    <property type="evidence" value="ECO:0007669"/>
    <property type="project" value="TreeGrafter"/>
</dbReference>
<dbReference type="GO" id="GO:0003677">
    <property type="term" value="F:DNA binding"/>
    <property type="evidence" value="ECO:0007669"/>
    <property type="project" value="UniProtKB-UniRule"/>
</dbReference>
<dbReference type="GO" id="GO:0006355">
    <property type="term" value="P:regulation of DNA-templated transcription"/>
    <property type="evidence" value="ECO:0007669"/>
    <property type="project" value="UniProtKB-UniRule"/>
</dbReference>
<dbReference type="FunFam" id="1.10.10.200:FF:000002">
    <property type="entry name" value="Probable transcriptional regulatory protein CLM62_37755"/>
    <property type="match status" value="1"/>
</dbReference>
<dbReference type="FunFam" id="3.30.70.980:FF:000002">
    <property type="entry name" value="Probable transcriptional regulatory protein YebC"/>
    <property type="match status" value="1"/>
</dbReference>
<dbReference type="Gene3D" id="1.10.10.200">
    <property type="match status" value="1"/>
</dbReference>
<dbReference type="Gene3D" id="3.30.70.980">
    <property type="match status" value="2"/>
</dbReference>
<dbReference type="HAMAP" id="MF_00693">
    <property type="entry name" value="Transcrip_reg_TACO1"/>
    <property type="match status" value="1"/>
</dbReference>
<dbReference type="InterPro" id="IPR017856">
    <property type="entry name" value="Integrase-like_N"/>
</dbReference>
<dbReference type="InterPro" id="IPR048300">
    <property type="entry name" value="TACO1_YebC-like_2nd/3rd_dom"/>
</dbReference>
<dbReference type="InterPro" id="IPR049083">
    <property type="entry name" value="TACO1_YebC_N"/>
</dbReference>
<dbReference type="InterPro" id="IPR002876">
    <property type="entry name" value="Transcrip_reg_TACO1-like"/>
</dbReference>
<dbReference type="InterPro" id="IPR026564">
    <property type="entry name" value="Transcrip_reg_TACO1-like_dom3"/>
</dbReference>
<dbReference type="InterPro" id="IPR029072">
    <property type="entry name" value="YebC-like"/>
</dbReference>
<dbReference type="NCBIfam" id="NF001030">
    <property type="entry name" value="PRK00110.1"/>
    <property type="match status" value="1"/>
</dbReference>
<dbReference type="NCBIfam" id="NF009044">
    <property type="entry name" value="PRK12378.1"/>
    <property type="match status" value="1"/>
</dbReference>
<dbReference type="NCBIfam" id="TIGR01033">
    <property type="entry name" value="YebC/PmpR family DNA-binding transcriptional regulator"/>
    <property type="match status" value="1"/>
</dbReference>
<dbReference type="PANTHER" id="PTHR12532:SF6">
    <property type="entry name" value="TRANSCRIPTIONAL REGULATORY PROTEIN YEBC-RELATED"/>
    <property type="match status" value="1"/>
</dbReference>
<dbReference type="PANTHER" id="PTHR12532">
    <property type="entry name" value="TRANSLATIONAL ACTIVATOR OF CYTOCHROME C OXIDASE 1"/>
    <property type="match status" value="1"/>
</dbReference>
<dbReference type="Pfam" id="PF20772">
    <property type="entry name" value="TACO1_YebC_N"/>
    <property type="match status" value="1"/>
</dbReference>
<dbReference type="Pfam" id="PF01709">
    <property type="entry name" value="Transcrip_reg"/>
    <property type="match status" value="1"/>
</dbReference>
<dbReference type="SUPFAM" id="SSF75625">
    <property type="entry name" value="YebC-like"/>
    <property type="match status" value="1"/>
</dbReference>
<evidence type="ECO:0000255" key="1">
    <source>
        <dbReference type="HAMAP-Rule" id="MF_00693"/>
    </source>
</evidence>
<comment type="subcellular location">
    <subcellularLocation>
        <location evidence="1">Cytoplasm</location>
    </subcellularLocation>
</comment>
<comment type="similarity">
    <text evidence="1">Belongs to the TACO1 family.</text>
</comment>
<gene>
    <name type="ordered locus">Cphy_2507</name>
</gene>
<protein>
    <recommendedName>
        <fullName evidence="1">Probable transcriptional regulatory protein Cphy_2507</fullName>
    </recommendedName>
</protein>
<reference key="1">
    <citation type="submission" date="2007-11" db="EMBL/GenBank/DDBJ databases">
        <title>Complete genome sequence of Clostridium phytofermentans ISDg.</title>
        <authorList>
            <person name="Leschine S.B."/>
            <person name="Warnick T.A."/>
            <person name="Blanchard J.L."/>
            <person name="Schnell D.J."/>
            <person name="Petit E.L."/>
            <person name="LaTouf W.G."/>
            <person name="Copeland A."/>
            <person name="Lucas S."/>
            <person name="Lapidus A."/>
            <person name="Barry K."/>
            <person name="Glavina del Rio T."/>
            <person name="Dalin E."/>
            <person name="Tice H."/>
            <person name="Pitluck S."/>
            <person name="Kiss H."/>
            <person name="Brettin T."/>
            <person name="Bruce D."/>
            <person name="Detter J.C."/>
            <person name="Han C."/>
            <person name="Kuske C."/>
            <person name="Schmutz J."/>
            <person name="Larimer F."/>
            <person name="Land M."/>
            <person name="Hauser L."/>
            <person name="Kyrpides N."/>
            <person name="Kim E.A."/>
            <person name="Richardson P."/>
        </authorList>
    </citation>
    <scope>NUCLEOTIDE SEQUENCE [LARGE SCALE GENOMIC DNA]</scope>
    <source>
        <strain>ATCC 700394 / DSM 18823 / ISDg</strain>
    </source>
</reference>
<feature type="chain" id="PRO_1000083150" description="Probable transcriptional regulatory protein Cphy_2507">
    <location>
        <begin position="1"/>
        <end position="242"/>
    </location>
</feature>
<sequence length="242" mass="26722">MSGHSKFANIKHKKEKNDATKGKIFTRLGREIAVAVKEGGPDPNNNNKLKDIVAKAKANNMPNDTIDRSIKKAAGEGNAVNYEFVTYEGYGPSGTAIIVEALTDNKNRTAANVRNAFTKGNGSVGTQGCVSYMFDQKGQIIIDKEECDMASDDLMMLALDAGASDFNEEDDSFEVLTEPDDFSVVRETLEKAGVPMMQAEVTMIPQTWVELSDETDLKNINRTLDLLDEDDDVQQVYHNWDE</sequence>
<name>Y2507_LACP7</name>
<proteinExistence type="inferred from homology"/>
<keyword id="KW-0963">Cytoplasm</keyword>
<keyword id="KW-0238">DNA-binding</keyword>
<keyword id="KW-1185">Reference proteome</keyword>
<keyword id="KW-0804">Transcription</keyword>
<keyword id="KW-0805">Transcription regulation</keyword>
<organism>
    <name type="scientific">Lachnoclostridium phytofermentans (strain ATCC 700394 / DSM 18823 / ISDg)</name>
    <name type="common">Clostridium phytofermentans</name>
    <dbReference type="NCBI Taxonomy" id="357809"/>
    <lineage>
        <taxon>Bacteria</taxon>
        <taxon>Bacillati</taxon>
        <taxon>Bacillota</taxon>
        <taxon>Clostridia</taxon>
        <taxon>Lachnospirales</taxon>
        <taxon>Lachnospiraceae</taxon>
    </lineage>
</organism>